<proteinExistence type="inferred from homology"/>
<protein>
    <recommendedName>
        <fullName evidence="1">PAN2-PAN3 deadenylation complex subunit PAN3</fullName>
    </recommendedName>
    <alternativeName>
        <fullName evidence="1">PAB1P-dependent poly(A)-specific ribonuclease</fullName>
    </alternativeName>
    <alternativeName>
        <fullName evidence="1">Poly(A)-nuclease deadenylation complex subunit 3</fullName>
        <shortName evidence="1">PAN deadenylation complex subunit 3</shortName>
    </alternativeName>
</protein>
<feature type="chain" id="PRO_0000295370" description="PAN2-PAN3 deadenylation complex subunit PAN3">
    <location>
        <begin position="1"/>
        <end position="794"/>
    </location>
</feature>
<feature type="zinc finger region" description="C3H1-type" evidence="1">
    <location>
        <begin position="7"/>
        <end position="36"/>
    </location>
</feature>
<feature type="region of interest" description="Disordered" evidence="2">
    <location>
        <begin position="40"/>
        <end position="97"/>
    </location>
</feature>
<feature type="region of interest" description="Disordered" evidence="2">
    <location>
        <begin position="187"/>
        <end position="226"/>
    </location>
</feature>
<feature type="region of interest" description="Pseudokinase domain" evidence="1">
    <location>
        <begin position="372"/>
        <end position="668"/>
    </location>
</feature>
<feature type="region of interest" description="Knob domain" evidence="1">
    <location>
        <begin position="708"/>
        <end position="794"/>
    </location>
</feature>
<feature type="coiled-coil region" evidence="1">
    <location>
        <begin position="669"/>
        <end position="707"/>
    </location>
</feature>
<feature type="compositionally biased region" description="Polar residues" evidence="2">
    <location>
        <begin position="83"/>
        <end position="94"/>
    </location>
</feature>
<feature type="compositionally biased region" description="Polar residues" evidence="2">
    <location>
        <begin position="189"/>
        <end position="199"/>
    </location>
</feature>
<feature type="compositionally biased region" description="Low complexity" evidence="2">
    <location>
        <begin position="200"/>
        <end position="226"/>
    </location>
</feature>
<feature type="binding site" evidence="1">
    <location>
        <position position="425"/>
    </location>
    <ligand>
        <name>ATP</name>
        <dbReference type="ChEBI" id="CHEBI:30616"/>
    </ligand>
</feature>
<feature type="binding site" evidence="1">
    <location>
        <begin position="494"/>
        <end position="501"/>
    </location>
    <ligand>
        <name>ATP</name>
        <dbReference type="ChEBI" id="CHEBI:30616"/>
    </ligand>
</feature>
<comment type="function">
    <text evidence="1">Regulatory subunit of the poly(A)-nuclease (PAN) deadenylation complex, one of two cytoplasmic mRNA deadenylases involved in mRNA turnover. PAN specifically shortens poly(A) tails of RNA and the activity is stimulated by poly(A)-binding protein PAB1. PAN deadenylation is followed by rapid degradation of the shortened mRNA tails by the CCR4-NOT complex. Deadenylated mRNAs are then degraded by two alternative mechanisms, namely exosome-mediated 3'-5' exonucleolytic degradation, or deadenylation-dependent mRNA decaping and subsequent 5'-3' exonucleolytic degradation by XRN1. May also be involved in post-transcriptional maturation of mRNA poly(A) tails. PAN3 acts as a positive regulator for PAN activity, recruiting the catalytic subunit PAN2 to mRNA via its interaction with RNA and with PAB1.</text>
</comment>
<comment type="subunit">
    <text evidence="1">Homodimer. Forms a heterotrimer with a catalytic subunit PAN2 to form the poly(A)-nuclease (PAN) deadenylation complex. Interacts (via PAM-2 motif) with poly(A)-binding protein PAB1 (via PABC domain), conferring substrate specificity of the enzyme complex.</text>
</comment>
<comment type="subcellular location">
    <subcellularLocation>
        <location evidence="1">Cytoplasm</location>
    </subcellularLocation>
</comment>
<comment type="domain">
    <text evidence="1">The N-terminal zinc finger binds to poly(A) RNA.</text>
</comment>
<comment type="domain">
    <text evidence="1">Contains a pseudokinase domain. The protein kinase domain is predicted to be catalytically inactive because some of the residues important for catalytic activity are substituted and it lacks the equivalent of the binding site for a peptide substrate. However, it has retained an ATP-binding site and ATP-binding is required for mRNA degradation, stimulating the activity of the PAN2 nuclease in vitro. The nucleotide-binding site is juxtaposed to the RNase active site of PAN2 in the complex and may actually bind nucleosides of a poly(A) RNA rather than ATP, feeding the poly(A)-tail to the active site of the deadenylase and thus increasing the efficiency with which this distributive enzyme degrades oligo(A) RNAs.</text>
</comment>
<comment type="domain">
    <text evidence="1">The pseudokinase domain, the coiled-coil (CC), and C-terminal knob domain (CK) form a structural unit (PKC) that forms an extensive high-affinity interaction surface for PAN2.</text>
</comment>
<comment type="similarity">
    <text evidence="1">Belongs to the protein kinase superfamily. PAN3 family.</text>
</comment>
<organism>
    <name type="scientific">Lodderomyces elongisporus (strain ATCC 11503 / CBS 2605 / JCM 1781 / NBRC 1676 / NRRL YB-4239)</name>
    <name type="common">Yeast</name>
    <name type="synonym">Saccharomyces elongisporus</name>
    <dbReference type="NCBI Taxonomy" id="379508"/>
    <lineage>
        <taxon>Eukaryota</taxon>
        <taxon>Fungi</taxon>
        <taxon>Dikarya</taxon>
        <taxon>Ascomycota</taxon>
        <taxon>Saccharomycotina</taxon>
        <taxon>Pichiomycetes</taxon>
        <taxon>Debaryomycetaceae</taxon>
        <taxon>Candida/Lodderomyces clade</taxon>
        <taxon>Lodderomyces</taxon>
    </lineage>
</organism>
<gene>
    <name evidence="1" type="primary">PAN3</name>
    <name type="ORF">LELG_03971</name>
</gene>
<sequence length="794" mass="88082">MNINLDSAKDVLCKNILIYGYCKFQDKGCAFSHNKQLTTPQQQQQQQQIEEEEESIRQGGTAVGVPGSQRNKGAGAGTGAKAIQSNGMVNSQETQSKRRFDANSPLFQPAVNNAKGTAVTNLASKFSNLSPRIRDAPVFKPENESPISQELNSKLATSGLGSIYSSKKFNASTPSFTPTGFDFSVAAQVGNNPGSTAPANLQLQQKQPQQPQQPQQPQQHQQQQQLGLQNLNQTQLGRNLNVLLQPQISQPFIPANAIPPSSAAGQLQLHMQVQQPQAQTQPPSHLTPSSIMSSAPMSAGFYTSALPIPQGGGMRNQPPSASMYPLQYHLYAPAPPPRLAVPTKEYETDSQQLFLPNELRESLHRKNEASLQTMQHLSLPDHVNSYHSLVPIDKSYDSSSKIWPGKSTVLFKCNSNFDGNLYALRKIEPCNEIVDETPFRNIRKWKSLHNNANIVALRDAFTTMAFSNTFSSPNSSAGNEVVGANGASLCFVYDYYPNLTTLLERHKKGIRVVPITEDLLWSYLTQLVNAVAAIHAKKLALRSTIDLSKIINTTEDRIKLSGCGISEVLSFSASNANASSGEEDEEREFARLRALDIVDLGKVLLELSALLLPMNLRASLTSTLLKNLANSTKLSQNFLDVLQVLTDPSLLQEPYSFDMDQFILQYISSHFMTLMNKLQNSHDWVELQLSTELENARLFRLMTKINFIISEMPTYDLNSQNRLKIIKVFQENLFNSVGPNGKKVVNMDRVLVNLNKLDCGIDEKTLLISDKECMIITFKEIKELIDTQFRLLRG</sequence>
<reference key="1">
    <citation type="journal article" date="2009" name="Nature">
        <title>Evolution of pathogenicity and sexual reproduction in eight Candida genomes.</title>
        <authorList>
            <person name="Butler G."/>
            <person name="Rasmussen M.D."/>
            <person name="Lin M.F."/>
            <person name="Santos M.A.S."/>
            <person name="Sakthikumar S."/>
            <person name="Munro C.A."/>
            <person name="Rheinbay E."/>
            <person name="Grabherr M."/>
            <person name="Forche A."/>
            <person name="Reedy J.L."/>
            <person name="Agrafioti I."/>
            <person name="Arnaud M.B."/>
            <person name="Bates S."/>
            <person name="Brown A.J.P."/>
            <person name="Brunke S."/>
            <person name="Costanzo M.C."/>
            <person name="Fitzpatrick D.A."/>
            <person name="de Groot P.W.J."/>
            <person name="Harris D."/>
            <person name="Hoyer L.L."/>
            <person name="Hube B."/>
            <person name="Klis F.M."/>
            <person name="Kodira C."/>
            <person name="Lennard N."/>
            <person name="Logue M.E."/>
            <person name="Martin R."/>
            <person name="Neiman A.M."/>
            <person name="Nikolaou E."/>
            <person name="Quail M.A."/>
            <person name="Quinn J."/>
            <person name="Santos M.C."/>
            <person name="Schmitzberger F.F."/>
            <person name="Sherlock G."/>
            <person name="Shah P."/>
            <person name="Silverstein K.A.T."/>
            <person name="Skrzypek M.S."/>
            <person name="Soll D."/>
            <person name="Staggs R."/>
            <person name="Stansfield I."/>
            <person name="Stumpf M.P.H."/>
            <person name="Sudbery P.E."/>
            <person name="Srikantha T."/>
            <person name="Zeng Q."/>
            <person name="Berman J."/>
            <person name="Berriman M."/>
            <person name="Heitman J."/>
            <person name="Gow N.A.R."/>
            <person name="Lorenz M.C."/>
            <person name="Birren B.W."/>
            <person name="Kellis M."/>
            <person name="Cuomo C.A."/>
        </authorList>
    </citation>
    <scope>NUCLEOTIDE SEQUENCE [LARGE SCALE GENOMIC DNA]</scope>
    <source>
        <strain>ATCC 11503 / BCRC 21390 / CBS 2605 / JCM 1781 / NBRC 1676 / NRRL YB-4239</strain>
    </source>
</reference>
<evidence type="ECO:0000255" key="1">
    <source>
        <dbReference type="HAMAP-Rule" id="MF_03181"/>
    </source>
</evidence>
<evidence type="ECO:0000256" key="2">
    <source>
        <dbReference type="SAM" id="MobiDB-lite"/>
    </source>
</evidence>
<name>PAN3_LODEL</name>
<dbReference type="EMBL" id="CH981528">
    <property type="protein sequence ID" value="EDK45792.1"/>
    <property type="molecule type" value="Genomic_DNA"/>
</dbReference>
<dbReference type="RefSeq" id="XP_001524939.1">
    <property type="nucleotide sequence ID" value="XM_001524889.1"/>
</dbReference>
<dbReference type="SMR" id="A5E2Y4"/>
<dbReference type="FunCoup" id="A5E2Y4">
    <property type="interactions" value="623"/>
</dbReference>
<dbReference type="STRING" id="379508.A5E2Y4"/>
<dbReference type="GeneID" id="5231823"/>
<dbReference type="KEGG" id="lel:PVL30_004790"/>
<dbReference type="VEuPathDB" id="FungiDB:LELG_03971"/>
<dbReference type="eggNOG" id="KOG3741">
    <property type="taxonomic scope" value="Eukaryota"/>
</dbReference>
<dbReference type="HOGENOM" id="CLU_016423_1_0_1"/>
<dbReference type="InParanoid" id="A5E2Y4"/>
<dbReference type="OrthoDB" id="204958at2759"/>
<dbReference type="Proteomes" id="UP000001996">
    <property type="component" value="Unassembled WGS sequence"/>
</dbReference>
<dbReference type="GO" id="GO:0000932">
    <property type="term" value="C:P-body"/>
    <property type="evidence" value="ECO:0007669"/>
    <property type="project" value="TreeGrafter"/>
</dbReference>
<dbReference type="GO" id="GO:0031251">
    <property type="term" value="C:PAN complex"/>
    <property type="evidence" value="ECO:0007669"/>
    <property type="project" value="UniProtKB-UniRule"/>
</dbReference>
<dbReference type="GO" id="GO:0005524">
    <property type="term" value="F:ATP binding"/>
    <property type="evidence" value="ECO:0007669"/>
    <property type="project" value="UniProtKB-UniRule"/>
</dbReference>
<dbReference type="GO" id="GO:0008143">
    <property type="term" value="F:poly(A) binding"/>
    <property type="evidence" value="ECO:0007669"/>
    <property type="project" value="TreeGrafter"/>
</dbReference>
<dbReference type="GO" id="GO:0004672">
    <property type="term" value="F:protein kinase activity"/>
    <property type="evidence" value="ECO:0007669"/>
    <property type="project" value="InterPro"/>
</dbReference>
<dbReference type="GO" id="GO:0008270">
    <property type="term" value="F:zinc ion binding"/>
    <property type="evidence" value="ECO:0007669"/>
    <property type="project" value="UniProtKB-KW"/>
</dbReference>
<dbReference type="GO" id="GO:0006397">
    <property type="term" value="P:mRNA processing"/>
    <property type="evidence" value="ECO:0007669"/>
    <property type="project" value="UniProtKB-KW"/>
</dbReference>
<dbReference type="GO" id="GO:0000289">
    <property type="term" value="P:nuclear-transcribed mRNA poly(A) tail shortening"/>
    <property type="evidence" value="ECO:0007669"/>
    <property type="project" value="UniProtKB-UniRule"/>
</dbReference>
<dbReference type="Gene3D" id="1.10.287.3700">
    <property type="match status" value="1"/>
</dbReference>
<dbReference type="Gene3D" id="1.20.5.5160">
    <property type="match status" value="1"/>
</dbReference>
<dbReference type="Gene3D" id="6.10.250.3160">
    <property type="match status" value="1"/>
</dbReference>
<dbReference type="Gene3D" id="1.10.510.10">
    <property type="entry name" value="Transferase(Phosphotransferase) domain 1"/>
    <property type="match status" value="1"/>
</dbReference>
<dbReference type="HAMAP" id="MF_03181">
    <property type="entry name" value="PAN3"/>
    <property type="match status" value="1"/>
</dbReference>
<dbReference type="InterPro" id="IPR011009">
    <property type="entry name" value="Kinase-like_dom_sf"/>
</dbReference>
<dbReference type="InterPro" id="IPR030844">
    <property type="entry name" value="PAN3"/>
</dbReference>
<dbReference type="InterPro" id="IPR041332">
    <property type="entry name" value="Pan3_PK"/>
</dbReference>
<dbReference type="InterPro" id="IPR000719">
    <property type="entry name" value="Prot_kinase_dom"/>
</dbReference>
<dbReference type="InterPro" id="IPR000571">
    <property type="entry name" value="Znf_CCCH"/>
</dbReference>
<dbReference type="PANTHER" id="PTHR12272">
    <property type="entry name" value="DEADENYLATION COMPLEX SUBUNIT PAN3"/>
    <property type="match status" value="1"/>
</dbReference>
<dbReference type="PANTHER" id="PTHR12272:SF11">
    <property type="entry name" value="PAN2-PAN3 DEADENYLATION COMPLEX SUBUNIT PAN3"/>
    <property type="match status" value="1"/>
</dbReference>
<dbReference type="Pfam" id="PF18101">
    <property type="entry name" value="Pan3_PK"/>
    <property type="match status" value="1"/>
</dbReference>
<dbReference type="SMART" id="SM00220">
    <property type="entry name" value="S_TKc"/>
    <property type="match status" value="1"/>
</dbReference>
<dbReference type="SUPFAM" id="SSF56112">
    <property type="entry name" value="Protein kinase-like (PK-like)"/>
    <property type="match status" value="1"/>
</dbReference>
<dbReference type="PROSITE" id="PS50011">
    <property type="entry name" value="PROTEIN_KINASE_DOM"/>
    <property type="match status" value="1"/>
</dbReference>
<dbReference type="PROSITE" id="PS50103">
    <property type="entry name" value="ZF_C3H1"/>
    <property type="match status" value="1"/>
</dbReference>
<accession>A5E2Y4</accession>
<keyword id="KW-0067">ATP-binding</keyword>
<keyword id="KW-0175">Coiled coil</keyword>
<keyword id="KW-0963">Cytoplasm</keyword>
<keyword id="KW-0479">Metal-binding</keyword>
<keyword id="KW-0507">mRNA processing</keyword>
<keyword id="KW-0547">Nucleotide-binding</keyword>
<keyword id="KW-1185">Reference proteome</keyword>
<keyword id="KW-0862">Zinc</keyword>
<keyword id="KW-0863">Zinc-finger</keyword>